<evidence type="ECO:0000255" key="1">
    <source>
        <dbReference type="HAMAP-Rule" id="MF_00226"/>
    </source>
</evidence>
<sequence>MKAELIAVGTEILTGQIVNTNAQFLSEKMAELGIDVYFQTAVGDNEERLLSVITTASQRSDLVILCGGLGPTKDDLTKQTLAKYLRKDLVYDEQACQKLDDFFAKRKPSSRTPNNERQAQVIEGSISLPNKTGLAVGGFITVDGISYVVLPGPPSELKPMVNEELVPLLSKQYSTLYSKVLRFFGIGESQLVTVLSDFIENQTDPTIAPYAKTGEVTLRLSTKTENQALADKKLGQLEAQLLSRKTLEGQPLADVFYGYGEDNSLARETFELLVKYDKTITAAESLTAGLFQSTLASFPGASQVFNGGFVTYSMEEKAKMLGLPLEELKSYGVVSAYTAEGMAEQARLLTGADIGVSLTGVAGPDMLEEQPAGTVFIGLATQNKVESIKVLISGRSRLDVCYIATLHAFNMVRKTLLKLENLL</sequence>
<gene>
    <name evidence="1" type="primary">cinA</name>
    <name type="ordered locus">Spy49_1754c</name>
</gene>
<dbReference type="EMBL" id="CP000829">
    <property type="protein sequence ID" value="ACI62004.1"/>
    <property type="molecule type" value="Genomic_DNA"/>
</dbReference>
<dbReference type="SMR" id="B5XJ05"/>
<dbReference type="KEGG" id="soz:Spy49_1754c"/>
<dbReference type="HOGENOM" id="CLU_030805_9_3_9"/>
<dbReference type="Proteomes" id="UP000001039">
    <property type="component" value="Chromosome"/>
</dbReference>
<dbReference type="CDD" id="cd00885">
    <property type="entry name" value="cinA"/>
    <property type="match status" value="1"/>
</dbReference>
<dbReference type="Gene3D" id="3.30.70.2860">
    <property type="match status" value="1"/>
</dbReference>
<dbReference type="Gene3D" id="3.90.950.20">
    <property type="entry name" value="CinA-like"/>
    <property type="match status" value="1"/>
</dbReference>
<dbReference type="Gene3D" id="3.40.980.10">
    <property type="entry name" value="MoaB/Mog-like domain"/>
    <property type="match status" value="1"/>
</dbReference>
<dbReference type="HAMAP" id="MF_00226_B">
    <property type="entry name" value="CinA_B"/>
    <property type="match status" value="1"/>
</dbReference>
<dbReference type="InterPro" id="IPR050101">
    <property type="entry name" value="CinA"/>
</dbReference>
<dbReference type="InterPro" id="IPR036653">
    <property type="entry name" value="CinA-like_C"/>
</dbReference>
<dbReference type="InterPro" id="IPR008136">
    <property type="entry name" value="CinA_C"/>
</dbReference>
<dbReference type="InterPro" id="IPR041424">
    <property type="entry name" value="CinA_KH"/>
</dbReference>
<dbReference type="InterPro" id="IPR008135">
    <property type="entry name" value="Competence-induced_CinA"/>
</dbReference>
<dbReference type="InterPro" id="IPR036425">
    <property type="entry name" value="MoaB/Mog-like_dom_sf"/>
</dbReference>
<dbReference type="InterPro" id="IPR001453">
    <property type="entry name" value="MoaB/Mog_dom"/>
</dbReference>
<dbReference type="NCBIfam" id="TIGR00200">
    <property type="entry name" value="cinA_nterm"/>
    <property type="match status" value="1"/>
</dbReference>
<dbReference type="NCBIfam" id="TIGR00177">
    <property type="entry name" value="molyb_syn"/>
    <property type="match status" value="1"/>
</dbReference>
<dbReference type="NCBIfam" id="TIGR00199">
    <property type="entry name" value="PncC_domain"/>
    <property type="match status" value="1"/>
</dbReference>
<dbReference type="NCBIfam" id="NF001813">
    <property type="entry name" value="PRK00549.1"/>
    <property type="match status" value="1"/>
</dbReference>
<dbReference type="PANTHER" id="PTHR13939">
    <property type="entry name" value="NICOTINAMIDE-NUCLEOTIDE AMIDOHYDROLASE PNCC"/>
    <property type="match status" value="1"/>
</dbReference>
<dbReference type="PANTHER" id="PTHR13939:SF0">
    <property type="entry name" value="NMN AMIDOHYDROLASE-LIKE PROTEIN YFAY"/>
    <property type="match status" value="1"/>
</dbReference>
<dbReference type="Pfam" id="PF02464">
    <property type="entry name" value="CinA"/>
    <property type="match status" value="1"/>
</dbReference>
<dbReference type="Pfam" id="PF18146">
    <property type="entry name" value="CinA_KH"/>
    <property type="match status" value="1"/>
</dbReference>
<dbReference type="Pfam" id="PF00994">
    <property type="entry name" value="MoCF_biosynth"/>
    <property type="match status" value="1"/>
</dbReference>
<dbReference type="PIRSF" id="PIRSF006728">
    <property type="entry name" value="CinA"/>
    <property type="match status" value="1"/>
</dbReference>
<dbReference type="SMART" id="SM00852">
    <property type="entry name" value="MoCF_biosynth"/>
    <property type="match status" value="1"/>
</dbReference>
<dbReference type="SUPFAM" id="SSF142433">
    <property type="entry name" value="CinA-like"/>
    <property type="match status" value="1"/>
</dbReference>
<dbReference type="SUPFAM" id="SSF53218">
    <property type="entry name" value="Molybdenum cofactor biosynthesis proteins"/>
    <property type="match status" value="1"/>
</dbReference>
<feature type="chain" id="PRO_1000100338" description="Putative competence-damage inducible protein">
    <location>
        <begin position="1"/>
        <end position="423"/>
    </location>
</feature>
<comment type="similarity">
    <text evidence="1">Belongs to the CinA family.</text>
</comment>
<accession>B5XJ05</accession>
<proteinExistence type="inferred from homology"/>
<organism>
    <name type="scientific">Streptococcus pyogenes serotype M49 (strain NZ131)</name>
    <dbReference type="NCBI Taxonomy" id="471876"/>
    <lineage>
        <taxon>Bacteria</taxon>
        <taxon>Bacillati</taxon>
        <taxon>Bacillota</taxon>
        <taxon>Bacilli</taxon>
        <taxon>Lactobacillales</taxon>
        <taxon>Streptococcaceae</taxon>
        <taxon>Streptococcus</taxon>
    </lineage>
</organism>
<protein>
    <recommendedName>
        <fullName evidence="1">Putative competence-damage inducible protein</fullName>
    </recommendedName>
</protein>
<name>CINA_STRPZ</name>
<reference key="1">
    <citation type="journal article" date="2008" name="J. Bacteriol.">
        <title>Genome sequence of a nephritogenic and highly transformable M49 strain of Streptococcus pyogenes.</title>
        <authorList>
            <person name="McShan W.M."/>
            <person name="Ferretti J.J."/>
            <person name="Karasawa T."/>
            <person name="Suvorov A.N."/>
            <person name="Lin S."/>
            <person name="Qin B."/>
            <person name="Jia H."/>
            <person name="Kenton S."/>
            <person name="Najar F."/>
            <person name="Wu H."/>
            <person name="Scott J."/>
            <person name="Roe B.A."/>
            <person name="Savic D.J."/>
        </authorList>
    </citation>
    <scope>NUCLEOTIDE SEQUENCE [LARGE SCALE GENOMIC DNA]</scope>
    <source>
        <strain>NZ131</strain>
    </source>
</reference>